<gene>
    <name evidence="1" type="primary">iraM</name>
    <name type="ordered locus">BWG_0985</name>
</gene>
<proteinExistence type="inferred from homology"/>
<dbReference type="EMBL" id="CP001396">
    <property type="protein sequence ID" value="ACR64860.1"/>
    <property type="molecule type" value="Genomic_DNA"/>
</dbReference>
<dbReference type="RefSeq" id="WP_001295666.1">
    <property type="nucleotide sequence ID" value="NC_012759.1"/>
</dbReference>
<dbReference type="SMR" id="C4ZS77"/>
<dbReference type="KEGG" id="ebw:BWG_0985"/>
<dbReference type="HOGENOM" id="CLU_143527_1_0_6"/>
<dbReference type="GO" id="GO:0005737">
    <property type="term" value="C:cytoplasm"/>
    <property type="evidence" value="ECO:0007669"/>
    <property type="project" value="UniProtKB-SubCell"/>
</dbReference>
<dbReference type="GO" id="GO:0009267">
    <property type="term" value="P:cellular response to starvation"/>
    <property type="evidence" value="ECO:0007669"/>
    <property type="project" value="UniProtKB-UniRule"/>
</dbReference>
<dbReference type="FunFam" id="2.40.50.650:FF:000001">
    <property type="entry name" value="Anti-adapter protein IraM"/>
    <property type="match status" value="1"/>
</dbReference>
<dbReference type="Gene3D" id="2.40.50.650">
    <property type="match status" value="1"/>
</dbReference>
<dbReference type="HAMAP" id="MF_01199">
    <property type="entry name" value="Anti_adapt_IraM"/>
    <property type="match status" value="1"/>
</dbReference>
<dbReference type="InterPro" id="IPR014448">
    <property type="entry name" value="Anti-adapter_IraM"/>
</dbReference>
<dbReference type="InterPro" id="IPR038679">
    <property type="entry name" value="PmrD_sf"/>
</dbReference>
<dbReference type="NCBIfam" id="NF007393">
    <property type="entry name" value="PRK09919.1"/>
    <property type="match status" value="1"/>
</dbReference>
<dbReference type="PIRSF" id="PIRSF007036">
    <property type="entry name" value="Elb1"/>
    <property type="match status" value="1"/>
</dbReference>
<protein>
    <recommendedName>
        <fullName evidence="1">Anti-adapter protein IraM</fullName>
    </recommendedName>
</protein>
<sequence length="107" mass="12133">MKWIVIDTVIQPTCGISFSAIWGNMKMIIWYQSTIFLPPGSIFTPVKSGIILKDKEYPITIYHIAPFNKDLWSLLKSSQECPPGESKITNKCLHNSCIIKICPYGLK</sequence>
<evidence type="ECO:0000255" key="1">
    <source>
        <dbReference type="HAMAP-Rule" id="MF_01199"/>
    </source>
</evidence>
<organism>
    <name type="scientific">Escherichia coli (strain K12 / MC4100 / BW2952)</name>
    <dbReference type="NCBI Taxonomy" id="595496"/>
    <lineage>
        <taxon>Bacteria</taxon>
        <taxon>Pseudomonadati</taxon>
        <taxon>Pseudomonadota</taxon>
        <taxon>Gammaproteobacteria</taxon>
        <taxon>Enterobacterales</taxon>
        <taxon>Enterobacteriaceae</taxon>
        <taxon>Escherichia</taxon>
    </lineage>
</organism>
<reference key="1">
    <citation type="journal article" date="2009" name="J. Bacteriol.">
        <title>Genomic sequencing reveals regulatory mutations and recombinational events in the widely used MC4100 lineage of Escherichia coli K-12.</title>
        <authorList>
            <person name="Ferenci T."/>
            <person name="Zhou Z."/>
            <person name="Betteridge T."/>
            <person name="Ren Y."/>
            <person name="Liu Y."/>
            <person name="Feng L."/>
            <person name="Reeves P.R."/>
            <person name="Wang L."/>
        </authorList>
    </citation>
    <scope>NUCLEOTIDE SEQUENCE [LARGE SCALE GENOMIC DNA]</scope>
    <source>
        <strain>K12 / MC4100 / BW2952</strain>
    </source>
</reference>
<feature type="chain" id="PRO_1000213817" description="Anti-adapter protein IraM">
    <location>
        <begin position="1"/>
        <end position="107"/>
    </location>
</feature>
<comment type="function">
    <text evidence="1">Inhibits RpoS proteolysis by regulating RssB activity, thereby increasing the stability of the sigma stress factor RpoS during magnesium starvation.</text>
</comment>
<comment type="subcellular location">
    <subcellularLocation>
        <location evidence="1">Cytoplasm</location>
    </subcellularLocation>
</comment>
<comment type="similarity">
    <text evidence="1">Belongs to the IraM/RssC family.</text>
</comment>
<keyword id="KW-0963">Cytoplasm</keyword>
<keyword id="KW-0346">Stress response</keyword>
<name>IRAM_ECOBW</name>
<accession>C4ZS77</accession>